<keyword id="KW-0963">Cytoplasm</keyword>
<keyword id="KW-0489">Methyltransferase</keyword>
<keyword id="KW-1185">Reference proteome</keyword>
<keyword id="KW-0694">RNA-binding</keyword>
<keyword id="KW-0698">rRNA processing</keyword>
<keyword id="KW-0949">S-adenosyl-L-methionine</keyword>
<keyword id="KW-0808">Transferase</keyword>
<proteinExistence type="inferred from homology"/>
<dbReference type="EC" id="2.1.1.182" evidence="1"/>
<dbReference type="EMBL" id="AE017245">
    <property type="protein sequence ID" value="AAZ43776.1"/>
    <property type="molecule type" value="Genomic_DNA"/>
</dbReference>
<dbReference type="RefSeq" id="WP_011283507.1">
    <property type="nucleotide sequence ID" value="NC_007294.1"/>
</dbReference>
<dbReference type="SMR" id="Q4A645"/>
<dbReference type="STRING" id="262723.MS53_0364"/>
<dbReference type="GeneID" id="93530146"/>
<dbReference type="KEGG" id="msy:MS53_0364"/>
<dbReference type="eggNOG" id="COG0030">
    <property type="taxonomic scope" value="Bacteria"/>
</dbReference>
<dbReference type="HOGENOM" id="CLU_041220_0_0_14"/>
<dbReference type="OrthoDB" id="9814755at2"/>
<dbReference type="Proteomes" id="UP000000549">
    <property type="component" value="Chromosome"/>
</dbReference>
<dbReference type="GO" id="GO:0005829">
    <property type="term" value="C:cytosol"/>
    <property type="evidence" value="ECO:0007669"/>
    <property type="project" value="TreeGrafter"/>
</dbReference>
<dbReference type="GO" id="GO:0052908">
    <property type="term" value="F:16S rRNA (adenine(1518)-N(6)/adenine(1519)-N(6))-dimethyltransferase activity"/>
    <property type="evidence" value="ECO:0007669"/>
    <property type="project" value="UniProtKB-EC"/>
</dbReference>
<dbReference type="GO" id="GO:0003723">
    <property type="term" value="F:RNA binding"/>
    <property type="evidence" value="ECO:0007669"/>
    <property type="project" value="UniProtKB-KW"/>
</dbReference>
<dbReference type="CDD" id="cd02440">
    <property type="entry name" value="AdoMet_MTases"/>
    <property type="match status" value="1"/>
</dbReference>
<dbReference type="FunFam" id="3.40.50.150:FF:000023">
    <property type="entry name" value="Ribosomal RNA small subunit methyltransferase A"/>
    <property type="match status" value="1"/>
</dbReference>
<dbReference type="Gene3D" id="1.10.8.100">
    <property type="entry name" value="Ribosomal RNA adenine dimethylase-like, domain 2"/>
    <property type="match status" value="1"/>
</dbReference>
<dbReference type="Gene3D" id="3.40.50.150">
    <property type="entry name" value="Vaccinia Virus protein VP39"/>
    <property type="match status" value="1"/>
</dbReference>
<dbReference type="HAMAP" id="MF_00607">
    <property type="entry name" value="16SrRNA_methyltr_A"/>
    <property type="match status" value="1"/>
</dbReference>
<dbReference type="InterPro" id="IPR001737">
    <property type="entry name" value="KsgA/Erm"/>
</dbReference>
<dbReference type="InterPro" id="IPR023165">
    <property type="entry name" value="rRNA_Ade_diMease-like_C"/>
</dbReference>
<dbReference type="InterPro" id="IPR020596">
    <property type="entry name" value="rRNA_Ade_Mease_Trfase_CS"/>
</dbReference>
<dbReference type="InterPro" id="IPR020598">
    <property type="entry name" value="rRNA_Ade_methylase_Trfase_N"/>
</dbReference>
<dbReference type="InterPro" id="IPR011530">
    <property type="entry name" value="rRNA_adenine_dimethylase"/>
</dbReference>
<dbReference type="InterPro" id="IPR029063">
    <property type="entry name" value="SAM-dependent_MTases_sf"/>
</dbReference>
<dbReference type="NCBIfam" id="TIGR00755">
    <property type="entry name" value="ksgA"/>
    <property type="match status" value="1"/>
</dbReference>
<dbReference type="PANTHER" id="PTHR11727">
    <property type="entry name" value="DIMETHYLADENOSINE TRANSFERASE"/>
    <property type="match status" value="1"/>
</dbReference>
<dbReference type="PANTHER" id="PTHR11727:SF7">
    <property type="entry name" value="DIMETHYLADENOSINE TRANSFERASE-RELATED"/>
    <property type="match status" value="1"/>
</dbReference>
<dbReference type="Pfam" id="PF00398">
    <property type="entry name" value="RrnaAD"/>
    <property type="match status" value="1"/>
</dbReference>
<dbReference type="SMART" id="SM00650">
    <property type="entry name" value="rADc"/>
    <property type="match status" value="1"/>
</dbReference>
<dbReference type="SUPFAM" id="SSF53335">
    <property type="entry name" value="S-adenosyl-L-methionine-dependent methyltransferases"/>
    <property type="match status" value="1"/>
</dbReference>
<dbReference type="PROSITE" id="PS01131">
    <property type="entry name" value="RRNA_A_DIMETH"/>
    <property type="match status" value="1"/>
</dbReference>
<dbReference type="PROSITE" id="PS51689">
    <property type="entry name" value="SAM_RNA_A_N6_MT"/>
    <property type="match status" value="1"/>
</dbReference>
<protein>
    <recommendedName>
        <fullName evidence="1">Ribosomal RNA small subunit methyltransferase A</fullName>
        <ecNumber evidence="1">2.1.1.182</ecNumber>
    </recommendedName>
    <alternativeName>
        <fullName evidence="1">16S rRNA (adenine(1518)-N(6)/adenine(1519)-N(6))-dimethyltransferase</fullName>
    </alternativeName>
    <alternativeName>
        <fullName evidence="1">16S rRNA dimethyladenosine transferase</fullName>
    </alternativeName>
    <alternativeName>
        <fullName evidence="1">16S rRNA dimethylase</fullName>
    </alternativeName>
    <alternativeName>
        <fullName evidence="1">S-adenosylmethionine-6-N', N'-adenosyl(rRNA) dimethyltransferase</fullName>
    </alternativeName>
</protein>
<reference key="1">
    <citation type="journal article" date="2005" name="J. Bacteriol.">
        <title>Swine and poultry pathogens: the complete genome sequences of two strains of Mycoplasma hyopneumoniae and a strain of Mycoplasma synoviae.</title>
        <authorList>
            <person name="Vasconcelos A.T.R."/>
            <person name="Ferreira H.B."/>
            <person name="Bizarro C.V."/>
            <person name="Bonatto S.L."/>
            <person name="Carvalho M.O."/>
            <person name="Pinto P.M."/>
            <person name="Almeida D.F."/>
            <person name="Almeida L.G.P."/>
            <person name="Almeida R."/>
            <person name="Alves-Junior L."/>
            <person name="Assuncao E.N."/>
            <person name="Azevedo V.A.C."/>
            <person name="Bogo M.R."/>
            <person name="Brigido M.M."/>
            <person name="Brocchi M."/>
            <person name="Burity H.A."/>
            <person name="Camargo A.A."/>
            <person name="Camargo S.S."/>
            <person name="Carepo M.S."/>
            <person name="Carraro D.M."/>
            <person name="de Mattos Cascardo J.C."/>
            <person name="Castro L.A."/>
            <person name="Cavalcanti G."/>
            <person name="Chemale G."/>
            <person name="Collevatti R.G."/>
            <person name="Cunha C.W."/>
            <person name="Dallagiovanna B."/>
            <person name="Dambros B.P."/>
            <person name="Dellagostin O.A."/>
            <person name="Falcao C."/>
            <person name="Fantinatti-Garboggini F."/>
            <person name="Felipe M.S.S."/>
            <person name="Fiorentin L."/>
            <person name="Franco G.R."/>
            <person name="Freitas N.S.A."/>
            <person name="Frias D."/>
            <person name="Grangeiro T.B."/>
            <person name="Grisard E.C."/>
            <person name="Guimaraes C.T."/>
            <person name="Hungria M."/>
            <person name="Jardim S.N."/>
            <person name="Krieger M.A."/>
            <person name="Laurino J.P."/>
            <person name="Lima L.F.A."/>
            <person name="Lopes M.I."/>
            <person name="Loreto E.L.S."/>
            <person name="Madeira H.M.F."/>
            <person name="Manfio G.P."/>
            <person name="Maranhao A.Q."/>
            <person name="Martinkovics C.T."/>
            <person name="Medeiros S.R.B."/>
            <person name="Moreira M.A.M."/>
            <person name="Neiva M."/>
            <person name="Ramalho-Neto C.E."/>
            <person name="Nicolas M.F."/>
            <person name="Oliveira S.C."/>
            <person name="Paixao R.F.C."/>
            <person name="Pedrosa F.O."/>
            <person name="Pena S.D.J."/>
            <person name="Pereira M."/>
            <person name="Pereira-Ferrari L."/>
            <person name="Piffer I."/>
            <person name="Pinto L.S."/>
            <person name="Potrich D.P."/>
            <person name="Salim A.C.M."/>
            <person name="Santos F.R."/>
            <person name="Schmitt R."/>
            <person name="Schneider M.P.C."/>
            <person name="Schrank A."/>
            <person name="Schrank I.S."/>
            <person name="Schuck A.F."/>
            <person name="Seuanez H.N."/>
            <person name="Silva D.W."/>
            <person name="Silva R."/>
            <person name="Silva S.C."/>
            <person name="Soares C.M.A."/>
            <person name="Souza K.R.L."/>
            <person name="Souza R.C."/>
            <person name="Staats C.C."/>
            <person name="Steffens M.B.R."/>
            <person name="Teixeira S.M.R."/>
            <person name="Urmenyi T.P."/>
            <person name="Vainstein M.H."/>
            <person name="Zuccherato L.W."/>
            <person name="Simpson A.J.G."/>
            <person name="Zaha A."/>
        </authorList>
    </citation>
    <scope>NUCLEOTIDE SEQUENCE [LARGE SCALE GENOMIC DNA]</scope>
    <source>
        <strain>53</strain>
    </source>
</reference>
<gene>
    <name evidence="1" type="primary">rsmA</name>
    <name evidence="1" type="synonym">ksgA</name>
    <name type="ordered locus">MS53_0364</name>
</gene>
<comment type="function">
    <text evidence="1">Specifically dimethylates two adjacent adenosines (A1518 and A1519) in the loop of a conserved hairpin near the 3'-end of 16S rRNA in the 30S particle. May play a critical role in biogenesis of 30S subunits.</text>
</comment>
<comment type="catalytic activity">
    <reaction evidence="1">
        <text>adenosine(1518)/adenosine(1519) in 16S rRNA + 4 S-adenosyl-L-methionine = N(6)-dimethyladenosine(1518)/N(6)-dimethyladenosine(1519) in 16S rRNA + 4 S-adenosyl-L-homocysteine + 4 H(+)</text>
        <dbReference type="Rhea" id="RHEA:19609"/>
        <dbReference type="Rhea" id="RHEA-COMP:10232"/>
        <dbReference type="Rhea" id="RHEA-COMP:10233"/>
        <dbReference type="ChEBI" id="CHEBI:15378"/>
        <dbReference type="ChEBI" id="CHEBI:57856"/>
        <dbReference type="ChEBI" id="CHEBI:59789"/>
        <dbReference type="ChEBI" id="CHEBI:74411"/>
        <dbReference type="ChEBI" id="CHEBI:74493"/>
        <dbReference type="EC" id="2.1.1.182"/>
    </reaction>
</comment>
<comment type="subcellular location">
    <subcellularLocation>
        <location evidence="1">Cytoplasm</location>
    </subcellularLocation>
</comment>
<comment type="similarity">
    <text evidence="1">Belongs to the class I-like SAM-binding methyltransferase superfamily. rRNA adenine N(6)-methyltransferase family. RsmA subfamily.</text>
</comment>
<sequence length="259" mass="30251">MNHLDKNAKKSLGQNFLRDKNIINKIVNVFNIENEKVLEIGPGQGDLTKELLKKAKKVLAFEIDKSLIEHLKNEIKDLHFELRDQDFLNVNLNDDEFKDYYVVANIPYYITSDILLKIYRSFWNFKGIVLMVQKEVAQRIVAQKNSKNYSKLSISSQYLADVKIEFIVNKNSFIPAPKVDSAVISLKFKDNIDKENLEKMLKFFLVCFANRRKKLTFTLNRNFNSTKVKLAYEKLNLSDNARIQELDVSQIVLLFTYLN</sequence>
<feature type="chain" id="PRO_0000257307" description="Ribosomal RNA small subunit methyltransferase A">
    <location>
        <begin position="1"/>
        <end position="259"/>
    </location>
</feature>
<feature type="binding site" evidence="1">
    <location>
        <position position="15"/>
    </location>
    <ligand>
        <name>S-adenosyl-L-methionine</name>
        <dbReference type="ChEBI" id="CHEBI:59789"/>
    </ligand>
</feature>
<feature type="binding site" evidence="1">
    <location>
        <position position="17"/>
    </location>
    <ligand>
        <name>S-adenosyl-L-methionine</name>
        <dbReference type="ChEBI" id="CHEBI:59789"/>
    </ligand>
</feature>
<feature type="binding site" evidence="1">
    <location>
        <position position="41"/>
    </location>
    <ligand>
        <name>S-adenosyl-L-methionine</name>
        <dbReference type="ChEBI" id="CHEBI:59789"/>
    </ligand>
</feature>
<feature type="binding site" evidence="1">
    <location>
        <position position="62"/>
    </location>
    <ligand>
        <name>S-adenosyl-L-methionine</name>
        <dbReference type="ChEBI" id="CHEBI:59789"/>
    </ligand>
</feature>
<feature type="binding site" evidence="1">
    <location>
        <position position="86"/>
    </location>
    <ligand>
        <name>S-adenosyl-L-methionine</name>
        <dbReference type="ChEBI" id="CHEBI:59789"/>
    </ligand>
</feature>
<feature type="binding site" evidence="1">
    <location>
        <position position="105"/>
    </location>
    <ligand>
        <name>S-adenosyl-L-methionine</name>
        <dbReference type="ChEBI" id="CHEBI:59789"/>
    </ligand>
</feature>
<organism>
    <name type="scientific">Mycoplasmopsis synoviae (strain 53)</name>
    <name type="common">Mycoplasma synoviae</name>
    <dbReference type="NCBI Taxonomy" id="262723"/>
    <lineage>
        <taxon>Bacteria</taxon>
        <taxon>Bacillati</taxon>
        <taxon>Mycoplasmatota</taxon>
        <taxon>Mycoplasmoidales</taxon>
        <taxon>Metamycoplasmataceae</taxon>
        <taxon>Mycoplasmopsis</taxon>
    </lineage>
</organism>
<accession>Q4A645</accession>
<name>RSMA_MYCS5</name>
<evidence type="ECO:0000255" key="1">
    <source>
        <dbReference type="HAMAP-Rule" id="MF_00607"/>
    </source>
</evidence>